<feature type="chain" id="PRO_0000295965" description="Small ribosomal subunit protein uS12">
    <location>
        <begin position="1"/>
        <end position="120"/>
    </location>
</feature>
<feature type="modified residue" description="3-methylthioaspartic acid" evidence="1">
    <location>
        <position position="88"/>
    </location>
</feature>
<protein>
    <recommendedName>
        <fullName evidence="2">Small ribosomal subunit protein uS12</fullName>
    </recommendedName>
    <alternativeName>
        <fullName evidence="3">30S ribosomal protein S12</fullName>
    </alternativeName>
</protein>
<sequence length="120" mass="13614">MTLNQILKFKRKKSVKKKKTPALLSSPQKKGICIKVYTTTPKKPNSALRKVCRVKLSNKNEITAYIPGEGHNLQEHSNVLVRGGRVKDLPGVKYHIIRNVYDLSGVINRKTSRSKYGKKK</sequence>
<name>RS12_CARRP</name>
<gene>
    <name evidence="2" type="primary">rpsL</name>
    <name type="ordered locus">CRP_160</name>
</gene>
<accession>Q05FI0</accession>
<reference key="1">
    <citation type="journal article" date="2006" name="Science">
        <title>The 160-kilobase genome of the bacterial endosymbiont Carsonella.</title>
        <authorList>
            <person name="Nakabachi A."/>
            <person name="Yamashita A."/>
            <person name="Toh H."/>
            <person name="Ishikawa H."/>
            <person name="Dunbar H.E."/>
            <person name="Moran N.A."/>
            <person name="Hattori M."/>
        </authorList>
    </citation>
    <scope>NUCLEOTIDE SEQUENCE [LARGE SCALE GENOMIC DNA]</scope>
    <source>
        <strain>PV</strain>
    </source>
</reference>
<keyword id="KW-0488">Methylation</keyword>
<keyword id="KW-0687">Ribonucleoprotein</keyword>
<keyword id="KW-0689">Ribosomal protein</keyword>
<keyword id="KW-0694">RNA-binding</keyword>
<keyword id="KW-0699">rRNA-binding</keyword>
<keyword id="KW-0820">tRNA-binding</keyword>
<evidence type="ECO:0000250" key="1"/>
<evidence type="ECO:0000255" key="2">
    <source>
        <dbReference type="HAMAP-Rule" id="MF_00403"/>
    </source>
</evidence>
<evidence type="ECO:0000305" key="3"/>
<dbReference type="EMBL" id="AP009180">
    <property type="protein sequence ID" value="BAF35191.1"/>
    <property type="molecule type" value="Genomic_DNA"/>
</dbReference>
<dbReference type="RefSeq" id="WP_011672383.1">
    <property type="nucleotide sequence ID" value="NC_008512.1"/>
</dbReference>
<dbReference type="SMR" id="Q05FI0"/>
<dbReference type="STRING" id="387662.CRP_160"/>
<dbReference type="KEGG" id="crp:CRP_160"/>
<dbReference type="HOGENOM" id="CLU_104295_1_2_6"/>
<dbReference type="OrthoDB" id="9802366at2"/>
<dbReference type="Proteomes" id="UP000000777">
    <property type="component" value="Chromosome"/>
</dbReference>
<dbReference type="GO" id="GO:0015935">
    <property type="term" value="C:small ribosomal subunit"/>
    <property type="evidence" value="ECO:0007669"/>
    <property type="project" value="InterPro"/>
</dbReference>
<dbReference type="GO" id="GO:0019843">
    <property type="term" value="F:rRNA binding"/>
    <property type="evidence" value="ECO:0007669"/>
    <property type="project" value="UniProtKB-UniRule"/>
</dbReference>
<dbReference type="GO" id="GO:0003735">
    <property type="term" value="F:structural constituent of ribosome"/>
    <property type="evidence" value="ECO:0007669"/>
    <property type="project" value="InterPro"/>
</dbReference>
<dbReference type="GO" id="GO:0000049">
    <property type="term" value="F:tRNA binding"/>
    <property type="evidence" value="ECO:0007669"/>
    <property type="project" value="UniProtKB-UniRule"/>
</dbReference>
<dbReference type="GO" id="GO:0006412">
    <property type="term" value="P:translation"/>
    <property type="evidence" value="ECO:0007669"/>
    <property type="project" value="UniProtKB-UniRule"/>
</dbReference>
<dbReference type="CDD" id="cd03368">
    <property type="entry name" value="Ribosomal_S12"/>
    <property type="match status" value="1"/>
</dbReference>
<dbReference type="FunFam" id="2.40.50.140:FF:000099">
    <property type="entry name" value="Ribosomal protein S12, mitochondrial"/>
    <property type="match status" value="1"/>
</dbReference>
<dbReference type="Gene3D" id="2.40.50.140">
    <property type="entry name" value="Nucleic acid-binding proteins"/>
    <property type="match status" value="1"/>
</dbReference>
<dbReference type="HAMAP" id="MF_00403_B">
    <property type="entry name" value="Ribosomal_uS12_B"/>
    <property type="match status" value="1"/>
</dbReference>
<dbReference type="InterPro" id="IPR012340">
    <property type="entry name" value="NA-bd_OB-fold"/>
</dbReference>
<dbReference type="InterPro" id="IPR006032">
    <property type="entry name" value="Ribosomal_uS12"/>
</dbReference>
<dbReference type="InterPro" id="IPR005679">
    <property type="entry name" value="Ribosomal_uS12_bac"/>
</dbReference>
<dbReference type="NCBIfam" id="TIGR00981">
    <property type="entry name" value="rpsL_bact"/>
    <property type="match status" value="1"/>
</dbReference>
<dbReference type="PANTHER" id="PTHR11652">
    <property type="entry name" value="30S RIBOSOMAL PROTEIN S12 FAMILY MEMBER"/>
    <property type="match status" value="1"/>
</dbReference>
<dbReference type="Pfam" id="PF00164">
    <property type="entry name" value="Ribosom_S12_S23"/>
    <property type="match status" value="1"/>
</dbReference>
<dbReference type="PIRSF" id="PIRSF002133">
    <property type="entry name" value="Ribosomal_S12/S23"/>
    <property type="match status" value="1"/>
</dbReference>
<dbReference type="PRINTS" id="PR01034">
    <property type="entry name" value="RIBOSOMALS12"/>
</dbReference>
<dbReference type="SUPFAM" id="SSF50249">
    <property type="entry name" value="Nucleic acid-binding proteins"/>
    <property type="match status" value="1"/>
</dbReference>
<dbReference type="PROSITE" id="PS00055">
    <property type="entry name" value="RIBOSOMAL_S12"/>
    <property type="match status" value="1"/>
</dbReference>
<organism>
    <name type="scientific">Carsonella ruddii (strain PV)</name>
    <dbReference type="NCBI Taxonomy" id="387662"/>
    <lineage>
        <taxon>Bacteria</taxon>
        <taxon>Pseudomonadati</taxon>
        <taxon>Pseudomonadota</taxon>
        <taxon>Gammaproteobacteria</taxon>
        <taxon>Oceanospirillales</taxon>
        <taxon>Halomonadaceae</taxon>
        <taxon>Zymobacter group</taxon>
        <taxon>Candidatus Carsonella</taxon>
    </lineage>
</organism>
<comment type="function">
    <text evidence="2">With S4 and S5 plays an important role in translational accuracy.</text>
</comment>
<comment type="function">
    <text evidence="2">Interacts with and stabilizes bases of the 16S rRNA that are involved in tRNA selection in the A site and with the mRNA backbone. Located at the interface of the 30S and 50S subunits, it traverses the body of the 30S subunit contacting proteins on the other side and probably holding the rRNA structure together. The combined cluster of proteins S8, S12 and S17 appears to hold together the shoulder and platform of the 30S subunit.</text>
</comment>
<comment type="subunit">
    <text evidence="2">Part of the 30S ribosomal subunit. Contacts proteins S8 and S17. May interact with IF1 in the 30S initiation complex.</text>
</comment>
<comment type="similarity">
    <text evidence="2">Belongs to the universal ribosomal protein uS12 family.</text>
</comment>
<proteinExistence type="inferred from homology"/>